<organism>
    <name type="scientific">Desulfotalea psychrophila (strain LSv54 / DSM 12343)</name>
    <dbReference type="NCBI Taxonomy" id="177439"/>
    <lineage>
        <taxon>Bacteria</taxon>
        <taxon>Pseudomonadati</taxon>
        <taxon>Thermodesulfobacteriota</taxon>
        <taxon>Desulfobulbia</taxon>
        <taxon>Desulfobulbales</taxon>
        <taxon>Desulfocapsaceae</taxon>
        <taxon>Desulfotalea</taxon>
    </lineage>
</organism>
<dbReference type="EMBL" id="CR522870">
    <property type="protein sequence ID" value="CAG35831.1"/>
    <property type="molecule type" value="Genomic_DNA"/>
</dbReference>
<dbReference type="RefSeq" id="WP_011188345.1">
    <property type="nucleotide sequence ID" value="NC_006138.1"/>
</dbReference>
<dbReference type="SMR" id="Q6AP93"/>
<dbReference type="STRING" id="177439.DP1102"/>
<dbReference type="KEGG" id="dps:DP1102"/>
<dbReference type="eggNOG" id="COG0781">
    <property type="taxonomic scope" value="Bacteria"/>
</dbReference>
<dbReference type="HOGENOM" id="CLU_087843_3_3_7"/>
<dbReference type="OrthoDB" id="9797817at2"/>
<dbReference type="Proteomes" id="UP000000602">
    <property type="component" value="Chromosome"/>
</dbReference>
<dbReference type="GO" id="GO:0005829">
    <property type="term" value="C:cytosol"/>
    <property type="evidence" value="ECO:0007669"/>
    <property type="project" value="TreeGrafter"/>
</dbReference>
<dbReference type="GO" id="GO:0003723">
    <property type="term" value="F:RNA binding"/>
    <property type="evidence" value="ECO:0007669"/>
    <property type="project" value="UniProtKB-UniRule"/>
</dbReference>
<dbReference type="GO" id="GO:0006353">
    <property type="term" value="P:DNA-templated transcription termination"/>
    <property type="evidence" value="ECO:0007669"/>
    <property type="project" value="UniProtKB-UniRule"/>
</dbReference>
<dbReference type="GO" id="GO:0031564">
    <property type="term" value="P:transcription antitermination"/>
    <property type="evidence" value="ECO:0007669"/>
    <property type="project" value="UniProtKB-KW"/>
</dbReference>
<dbReference type="CDD" id="cd00619">
    <property type="entry name" value="Terminator_NusB"/>
    <property type="match status" value="1"/>
</dbReference>
<dbReference type="Gene3D" id="1.10.940.10">
    <property type="entry name" value="NusB-like"/>
    <property type="match status" value="1"/>
</dbReference>
<dbReference type="HAMAP" id="MF_00073">
    <property type="entry name" value="NusB"/>
    <property type="match status" value="1"/>
</dbReference>
<dbReference type="InterPro" id="IPR035926">
    <property type="entry name" value="NusB-like_sf"/>
</dbReference>
<dbReference type="InterPro" id="IPR011605">
    <property type="entry name" value="NusB_fam"/>
</dbReference>
<dbReference type="InterPro" id="IPR006027">
    <property type="entry name" value="NusB_RsmB_TIM44"/>
</dbReference>
<dbReference type="NCBIfam" id="TIGR01951">
    <property type="entry name" value="nusB"/>
    <property type="match status" value="1"/>
</dbReference>
<dbReference type="PANTHER" id="PTHR11078:SF3">
    <property type="entry name" value="ANTITERMINATION NUSB DOMAIN-CONTAINING PROTEIN"/>
    <property type="match status" value="1"/>
</dbReference>
<dbReference type="PANTHER" id="PTHR11078">
    <property type="entry name" value="N UTILIZATION SUBSTANCE PROTEIN B-RELATED"/>
    <property type="match status" value="1"/>
</dbReference>
<dbReference type="Pfam" id="PF01029">
    <property type="entry name" value="NusB"/>
    <property type="match status" value="1"/>
</dbReference>
<dbReference type="SUPFAM" id="SSF48013">
    <property type="entry name" value="NusB-like"/>
    <property type="match status" value="1"/>
</dbReference>
<accession>Q6AP93</accession>
<protein>
    <recommendedName>
        <fullName evidence="1">Transcription antitermination protein NusB</fullName>
    </recommendedName>
    <alternativeName>
        <fullName evidence="1">Antitermination factor NusB</fullName>
    </alternativeName>
</protein>
<evidence type="ECO:0000255" key="1">
    <source>
        <dbReference type="HAMAP-Rule" id="MF_00073"/>
    </source>
</evidence>
<reference key="1">
    <citation type="journal article" date="2004" name="Environ. Microbiol.">
        <title>The genome of Desulfotalea psychrophila, a sulfate-reducing bacterium from permanently cold Arctic sediments.</title>
        <authorList>
            <person name="Rabus R."/>
            <person name="Ruepp A."/>
            <person name="Frickey T."/>
            <person name="Rattei T."/>
            <person name="Fartmann B."/>
            <person name="Stark M."/>
            <person name="Bauer M."/>
            <person name="Zibat A."/>
            <person name="Lombardot T."/>
            <person name="Becker I."/>
            <person name="Amann J."/>
            <person name="Gellner K."/>
            <person name="Teeling H."/>
            <person name="Leuschner W.D."/>
            <person name="Gloeckner F.-O."/>
            <person name="Lupas A.N."/>
            <person name="Amann R."/>
            <person name="Klenk H.-P."/>
        </authorList>
    </citation>
    <scope>NUCLEOTIDE SEQUENCE [LARGE SCALE GENOMIC DNA]</scope>
    <source>
        <strain>DSM 12343 / LSv54</strain>
    </source>
</reference>
<gene>
    <name evidence="1" type="primary">nusB</name>
    <name type="ordered locus">DP1102</name>
</gene>
<comment type="function">
    <text evidence="1">Involved in transcription antitermination. Required for transcription of ribosomal RNA (rRNA) genes. Binds specifically to the boxA antiterminator sequence of the ribosomal RNA (rrn) operons.</text>
</comment>
<comment type="similarity">
    <text evidence="1">Belongs to the NusB family.</text>
</comment>
<proteinExistence type="inferred from homology"/>
<feature type="chain" id="PRO_0000265516" description="Transcription antitermination protein NusB">
    <location>
        <begin position="1"/>
        <end position="141"/>
    </location>
</feature>
<sequence length="141" mass="16025">MSIRRFAREAALQFLYQDDFIPESADTPGELKERFEQFCEIYQVNKKGRTYALNLIAGVLADQEAIDRLIEEAAVNWRMSRISATDRNLLRVATFEINFCDDVPAEVAINEAVEIAKRFCGDESPKFVNGVLDAVKTLCQK</sequence>
<name>NUSB_DESPS</name>
<keyword id="KW-1185">Reference proteome</keyword>
<keyword id="KW-0694">RNA-binding</keyword>
<keyword id="KW-0804">Transcription</keyword>
<keyword id="KW-0889">Transcription antitermination</keyword>
<keyword id="KW-0805">Transcription regulation</keyword>